<name>NADK_SULDN</name>
<sequence>MDNKIIKKVGVILRPSSPQLKSGYEKLEKIFSSYSIEVLIEDKSAKMIGASGASFKKICNECDFLVSFGGDGTLISTVRKSFDYDIPILGIHAGNLGFLADLSLDELDSFVEKITQNRYKIDERAVLEATVIKNEKEIKMYAFNDVVLTRTRVSNMIHIETLVNSRSFNTYYGDGVVVSTPTGSTAYNLSAGGPVLFPMSNVFALTPICPHSLTQRPVVLPGKFTIEMKTSEERALIIIDGQDVHELELGESVHIKLATKTVKLMHKEEYNYFDVLKEKLRWGE</sequence>
<accession>Q30RL8</accession>
<dbReference type="EC" id="2.7.1.23" evidence="1"/>
<dbReference type="EMBL" id="CP000153">
    <property type="protein sequence ID" value="ABB44363.1"/>
    <property type="molecule type" value="Genomic_DNA"/>
</dbReference>
<dbReference type="RefSeq" id="WP_011372715.1">
    <property type="nucleotide sequence ID" value="NC_007575.1"/>
</dbReference>
<dbReference type="SMR" id="Q30RL8"/>
<dbReference type="STRING" id="326298.Suden_1085"/>
<dbReference type="KEGG" id="tdn:Suden_1085"/>
<dbReference type="eggNOG" id="COG0061">
    <property type="taxonomic scope" value="Bacteria"/>
</dbReference>
<dbReference type="HOGENOM" id="CLU_008831_0_3_7"/>
<dbReference type="OrthoDB" id="9774737at2"/>
<dbReference type="Proteomes" id="UP000002714">
    <property type="component" value="Chromosome"/>
</dbReference>
<dbReference type="GO" id="GO:0005737">
    <property type="term" value="C:cytoplasm"/>
    <property type="evidence" value="ECO:0007669"/>
    <property type="project" value="UniProtKB-SubCell"/>
</dbReference>
<dbReference type="GO" id="GO:0005524">
    <property type="term" value="F:ATP binding"/>
    <property type="evidence" value="ECO:0007669"/>
    <property type="project" value="UniProtKB-KW"/>
</dbReference>
<dbReference type="GO" id="GO:0046872">
    <property type="term" value="F:metal ion binding"/>
    <property type="evidence" value="ECO:0007669"/>
    <property type="project" value="UniProtKB-UniRule"/>
</dbReference>
<dbReference type="GO" id="GO:0051287">
    <property type="term" value="F:NAD binding"/>
    <property type="evidence" value="ECO:0007669"/>
    <property type="project" value="UniProtKB-ARBA"/>
</dbReference>
<dbReference type="GO" id="GO:0003951">
    <property type="term" value="F:NAD+ kinase activity"/>
    <property type="evidence" value="ECO:0007669"/>
    <property type="project" value="UniProtKB-UniRule"/>
</dbReference>
<dbReference type="GO" id="GO:0019674">
    <property type="term" value="P:NAD metabolic process"/>
    <property type="evidence" value="ECO:0007669"/>
    <property type="project" value="InterPro"/>
</dbReference>
<dbReference type="GO" id="GO:0006741">
    <property type="term" value="P:NADP biosynthetic process"/>
    <property type="evidence" value="ECO:0007669"/>
    <property type="project" value="UniProtKB-UniRule"/>
</dbReference>
<dbReference type="Gene3D" id="3.40.50.10330">
    <property type="entry name" value="Probable inorganic polyphosphate/atp-NAD kinase, domain 1"/>
    <property type="match status" value="1"/>
</dbReference>
<dbReference type="Gene3D" id="2.60.200.30">
    <property type="entry name" value="Probable inorganic polyphosphate/atp-NAD kinase, domain 2"/>
    <property type="match status" value="1"/>
</dbReference>
<dbReference type="HAMAP" id="MF_00361">
    <property type="entry name" value="NAD_kinase"/>
    <property type="match status" value="1"/>
</dbReference>
<dbReference type="InterPro" id="IPR017438">
    <property type="entry name" value="ATP-NAD_kinase_N"/>
</dbReference>
<dbReference type="InterPro" id="IPR017437">
    <property type="entry name" value="ATP-NAD_kinase_PpnK-typ_C"/>
</dbReference>
<dbReference type="InterPro" id="IPR016064">
    <property type="entry name" value="NAD/diacylglycerol_kinase_sf"/>
</dbReference>
<dbReference type="InterPro" id="IPR002504">
    <property type="entry name" value="NADK"/>
</dbReference>
<dbReference type="PANTHER" id="PTHR20275">
    <property type="entry name" value="NAD KINASE"/>
    <property type="match status" value="1"/>
</dbReference>
<dbReference type="PANTHER" id="PTHR20275:SF0">
    <property type="entry name" value="NAD KINASE"/>
    <property type="match status" value="1"/>
</dbReference>
<dbReference type="Pfam" id="PF01513">
    <property type="entry name" value="NAD_kinase"/>
    <property type="match status" value="1"/>
</dbReference>
<dbReference type="Pfam" id="PF20143">
    <property type="entry name" value="NAD_kinase_C"/>
    <property type="match status" value="1"/>
</dbReference>
<dbReference type="SUPFAM" id="SSF111331">
    <property type="entry name" value="NAD kinase/diacylglycerol kinase-like"/>
    <property type="match status" value="1"/>
</dbReference>
<organism>
    <name type="scientific">Sulfurimonas denitrificans (strain ATCC 33889 / DSM 1251)</name>
    <name type="common">Thiomicrospira denitrificans (strain ATCC 33889 / DSM 1251)</name>
    <dbReference type="NCBI Taxonomy" id="326298"/>
    <lineage>
        <taxon>Bacteria</taxon>
        <taxon>Pseudomonadati</taxon>
        <taxon>Campylobacterota</taxon>
        <taxon>Epsilonproteobacteria</taxon>
        <taxon>Campylobacterales</taxon>
        <taxon>Sulfurimonadaceae</taxon>
        <taxon>Sulfurimonas</taxon>
    </lineage>
</organism>
<gene>
    <name evidence="1" type="primary">nadK</name>
    <name type="ordered locus">Suden_1085</name>
</gene>
<keyword id="KW-0067">ATP-binding</keyword>
<keyword id="KW-0963">Cytoplasm</keyword>
<keyword id="KW-0418">Kinase</keyword>
<keyword id="KW-0520">NAD</keyword>
<keyword id="KW-0521">NADP</keyword>
<keyword id="KW-0547">Nucleotide-binding</keyword>
<keyword id="KW-1185">Reference proteome</keyword>
<keyword id="KW-0808">Transferase</keyword>
<reference key="1">
    <citation type="journal article" date="2008" name="Appl. Environ. Microbiol.">
        <title>Genome of the epsilonproteobacterial chemolithoautotroph Sulfurimonas denitrificans.</title>
        <authorList>
            <person name="Sievert S.M."/>
            <person name="Scott K.M."/>
            <person name="Klotz M.G."/>
            <person name="Chain P.S.G."/>
            <person name="Hauser L.J."/>
            <person name="Hemp J."/>
            <person name="Huegler M."/>
            <person name="Land M."/>
            <person name="Lapidus A."/>
            <person name="Larimer F.W."/>
            <person name="Lucas S."/>
            <person name="Malfatti S.A."/>
            <person name="Meyer F."/>
            <person name="Paulsen I.T."/>
            <person name="Ren Q."/>
            <person name="Simon J."/>
            <person name="Bailey K."/>
            <person name="Diaz E."/>
            <person name="Fitzpatrick K.A."/>
            <person name="Glover B."/>
            <person name="Gwatney N."/>
            <person name="Korajkic A."/>
            <person name="Long A."/>
            <person name="Mobberley J.M."/>
            <person name="Pantry S.N."/>
            <person name="Pazder G."/>
            <person name="Peterson S."/>
            <person name="Quintanilla J.D."/>
            <person name="Sprinkle R."/>
            <person name="Stephens J."/>
            <person name="Thomas P."/>
            <person name="Vaughn R."/>
            <person name="Weber M.J."/>
            <person name="Wooten L.L."/>
        </authorList>
    </citation>
    <scope>NUCLEOTIDE SEQUENCE [LARGE SCALE GENOMIC DNA]</scope>
    <source>
        <strain>ATCC 33889 / DSM 1251</strain>
    </source>
</reference>
<protein>
    <recommendedName>
        <fullName evidence="1">NAD kinase</fullName>
        <ecNumber evidence="1">2.7.1.23</ecNumber>
    </recommendedName>
    <alternativeName>
        <fullName evidence="1">ATP-dependent NAD kinase</fullName>
    </alternativeName>
</protein>
<proteinExistence type="inferred from homology"/>
<comment type="function">
    <text evidence="1">Involved in the regulation of the intracellular balance of NAD and NADP, and is a key enzyme in the biosynthesis of NADP. Catalyzes specifically the phosphorylation on 2'-hydroxyl of the adenosine moiety of NAD to yield NADP.</text>
</comment>
<comment type="catalytic activity">
    <reaction evidence="1">
        <text>NAD(+) + ATP = ADP + NADP(+) + H(+)</text>
        <dbReference type="Rhea" id="RHEA:18629"/>
        <dbReference type="ChEBI" id="CHEBI:15378"/>
        <dbReference type="ChEBI" id="CHEBI:30616"/>
        <dbReference type="ChEBI" id="CHEBI:57540"/>
        <dbReference type="ChEBI" id="CHEBI:58349"/>
        <dbReference type="ChEBI" id="CHEBI:456216"/>
        <dbReference type="EC" id="2.7.1.23"/>
    </reaction>
</comment>
<comment type="cofactor">
    <cofactor evidence="1">
        <name>a divalent metal cation</name>
        <dbReference type="ChEBI" id="CHEBI:60240"/>
    </cofactor>
</comment>
<comment type="subcellular location">
    <subcellularLocation>
        <location evidence="1">Cytoplasm</location>
    </subcellularLocation>
</comment>
<comment type="similarity">
    <text evidence="1">Belongs to the NAD kinase family.</text>
</comment>
<feature type="chain" id="PRO_0000229708" description="NAD kinase">
    <location>
        <begin position="1"/>
        <end position="284"/>
    </location>
</feature>
<feature type="active site" description="Proton acceptor" evidence="1">
    <location>
        <position position="71"/>
    </location>
</feature>
<feature type="binding site" evidence="1">
    <location>
        <begin position="71"/>
        <end position="72"/>
    </location>
    <ligand>
        <name>NAD(+)</name>
        <dbReference type="ChEBI" id="CHEBI:57540"/>
    </ligand>
</feature>
<feature type="binding site" evidence="1">
    <location>
        <begin position="144"/>
        <end position="145"/>
    </location>
    <ligand>
        <name>NAD(+)</name>
        <dbReference type="ChEBI" id="CHEBI:57540"/>
    </ligand>
</feature>
<feature type="binding site" evidence="1">
    <location>
        <position position="174"/>
    </location>
    <ligand>
        <name>NAD(+)</name>
        <dbReference type="ChEBI" id="CHEBI:57540"/>
    </ligand>
</feature>
<feature type="binding site" evidence="1">
    <location>
        <begin position="185"/>
        <end position="190"/>
    </location>
    <ligand>
        <name>NAD(+)</name>
        <dbReference type="ChEBI" id="CHEBI:57540"/>
    </ligand>
</feature>
<feature type="binding site" evidence="1">
    <location>
        <position position="242"/>
    </location>
    <ligand>
        <name>NAD(+)</name>
        <dbReference type="ChEBI" id="CHEBI:57540"/>
    </ligand>
</feature>
<evidence type="ECO:0000255" key="1">
    <source>
        <dbReference type="HAMAP-Rule" id="MF_00361"/>
    </source>
</evidence>